<gene>
    <name evidence="1" type="primary">ubiC</name>
    <name type="ordered locus">CKO_03876</name>
</gene>
<reference key="1">
    <citation type="submission" date="2007-08" db="EMBL/GenBank/DDBJ databases">
        <authorList>
            <consortium name="The Citrobacter koseri Genome Sequencing Project"/>
            <person name="McClelland M."/>
            <person name="Sanderson E.K."/>
            <person name="Porwollik S."/>
            <person name="Spieth J."/>
            <person name="Clifton W.S."/>
            <person name="Latreille P."/>
            <person name="Courtney L."/>
            <person name="Wang C."/>
            <person name="Pepin K."/>
            <person name="Bhonagiri V."/>
            <person name="Nash W."/>
            <person name="Johnson M."/>
            <person name="Thiruvilangam P."/>
            <person name="Wilson R."/>
        </authorList>
    </citation>
    <scope>NUCLEOTIDE SEQUENCE [LARGE SCALE GENOMIC DNA]</scope>
    <source>
        <strain>ATCC BAA-895 / CDC 4225-83 / SGSC4696</strain>
    </source>
</reference>
<evidence type="ECO:0000255" key="1">
    <source>
        <dbReference type="HAMAP-Rule" id="MF_01632"/>
    </source>
</evidence>
<proteinExistence type="inferred from homology"/>
<name>UBIC_CITK8</name>
<accession>A8AN89</accession>
<comment type="function">
    <text evidence="1">Removes the pyruvyl group from chorismate, with concomitant aromatization of the ring, to provide 4-hydroxybenzoate (4HB) for the ubiquinone pathway.</text>
</comment>
<comment type="catalytic activity">
    <reaction evidence="1">
        <text>chorismate = 4-hydroxybenzoate + pyruvate</text>
        <dbReference type="Rhea" id="RHEA:16505"/>
        <dbReference type="ChEBI" id="CHEBI:15361"/>
        <dbReference type="ChEBI" id="CHEBI:17879"/>
        <dbReference type="ChEBI" id="CHEBI:29748"/>
        <dbReference type="EC" id="4.1.3.40"/>
    </reaction>
</comment>
<comment type="pathway">
    <text evidence="1">Cofactor biosynthesis; ubiquinone biosynthesis.</text>
</comment>
<comment type="subunit">
    <text evidence="1">Monomer.</text>
</comment>
<comment type="subcellular location">
    <subcellularLocation>
        <location evidence="1">Cytoplasm</location>
    </subcellularLocation>
</comment>
<comment type="similarity">
    <text evidence="1">Belongs to the UbiC family.</text>
</comment>
<dbReference type="EC" id="4.1.3.40" evidence="1"/>
<dbReference type="EMBL" id="CP000822">
    <property type="protein sequence ID" value="ABV14952.1"/>
    <property type="molecule type" value="Genomic_DNA"/>
</dbReference>
<dbReference type="RefSeq" id="WP_012134646.1">
    <property type="nucleotide sequence ID" value="NC_009792.1"/>
</dbReference>
<dbReference type="SMR" id="A8AN89"/>
<dbReference type="STRING" id="290338.CKO_03876"/>
<dbReference type="GeneID" id="45137546"/>
<dbReference type="KEGG" id="cko:CKO_03876"/>
<dbReference type="HOGENOM" id="CLU_096824_1_0_6"/>
<dbReference type="OrthoDB" id="9789493at2"/>
<dbReference type="UniPathway" id="UPA00232"/>
<dbReference type="Proteomes" id="UP000008148">
    <property type="component" value="Chromosome"/>
</dbReference>
<dbReference type="GO" id="GO:0005829">
    <property type="term" value="C:cytosol"/>
    <property type="evidence" value="ECO:0007669"/>
    <property type="project" value="TreeGrafter"/>
</dbReference>
<dbReference type="GO" id="GO:0008813">
    <property type="term" value="F:chorismate lyase activity"/>
    <property type="evidence" value="ECO:0007669"/>
    <property type="project" value="UniProtKB-UniRule"/>
</dbReference>
<dbReference type="GO" id="GO:0042866">
    <property type="term" value="P:pyruvate biosynthetic process"/>
    <property type="evidence" value="ECO:0007669"/>
    <property type="project" value="UniProtKB-UniRule"/>
</dbReference>
<dbReference type="GO" id="GO:0006744">
    <property type="term" value="P:ubiquinone biosynthetic process"/>
    <property type="evidence" value="ECO:0007669"/>
    <property type="project" value="UniProtKB-UniRule"/>
</dbReference>
<dbReference type="FunFam" id="3.40.1410.10:FF:000002">
    <property type="entry name" value="Chorismate pyruvate-lyase"/>
    <property type="match status" value="1"/>
</dbReference>
<dbReference type="Gene3D" id="3.40.1410.10">
    <property type="entry name" value="Chorismate lyase-like"/>
    <property type="match status" value="1"/>
</dbReference>
<dbReference type="HAMAP" id="MF_01632">
    <property type="entry name" value="UbiC"/>
    <property type="match status" value="1"/>
</dbReference>
<dbReference type="InterPro" id="IPR007440">
    <property type="entry name" value="Chorismate--pyruvate_lyase"/>
</dbReference>
<dbReference type="InterPro" id="IPR028978">
    <property type="entry name" value="Chorismate_lyase_/UTRA_dom_sf"/>
</dbReference>
<dbReference type="NCBIfam" id="NF008656">
    <property type="entry name" value="PRK11655.1"/>
    <property type="match status" value="1"/>
</dbReference>
<dbReference type="PANTHER" id="PTHR38683">
    <property type="entry name" value="CHORISMATE PYRUVATE-LYASE"/>
    <property type="match status" value="1"/>
</dbReference>
<dbReference type="PANTHER" id="PTHR38683:SF1">
    <property type="entry name" value="CHORISMATE PYRUVATE-LYASE"/>
    <property type="match status" value="1"/>
</dbReference>
<dbReference type="Pfam" id="PF04345">
    <property type="entry name" value="Chor_lyase"/>
    <property type="match status" value="1"/>
</dbReference>
<dbReference type="SUPFAM" id="SSF64288">
    <property type="entry name" value="Chorismate lyase-like"/>
    <property type="match status" value="1"/>
</dbReference>
<sequence length="165" mass="18766">MSHPALTQLRALRYFKEIPALDSRLLDWLLLEDSMTKRFEQEGKRVSVTLLREAFVGPHEVAEEVALLPVESRYWLREILLCADGEPWLAGRTVVPESTLCGPELALQNLGKTPLGRYLFTSSTLTRDFIEIGRDAALWGRRSRLRLSGKPLMLTELFLPASPLY</sequence>
<protein>
    <recommendedName>
        <fullName evidence="1">Chorismate pyruvate-lyase</fullName>
        <shortName evidence="1">CL</shortName>
        <shortName evidence="1">CPL</shortName>
        <ecNumber evidence="1">4.1.3.40</ecNumber>
    </recommendedName>
</protein>
<feature type="chain" id="PRO_1000069741" description="Chorismate pyruvate-lyase">
    <location>
        <begin position="1"/>
        <end position="165"/>
    </location>
</feature>
<feature type="binding site" evidence="1">
    <location>
        <position position="35"/>
    </location>
    <ligand>
        <name>substrate</name>
    </ligand>
</feature>
<feature type="binding site" evidence="1">
    <location>
        <position position="77"/>
    </location>
    <ligand>
        <name>substrate</name>
    </ligand>
</feature>
<feature type="binding site" evidence="1">
    <location>
        <position position="115"/>
    </location>
    <ligand>
        <name>substrate</name>
    </ligand>
</feature>
<feature type="binding site" evidence="1">
    <location>
        <position position="156"/>
    </location>
    <ligand>
        <name>substrate</name>
    </ligand>
</feature>
<organism>
    <name type="scientific">Citrobacter koseri (strain ATCC BAA-895 / CDC 4225-83 / SGSC4696)</name>
    <dbReference type="NCBI Taxonomy" id="290338"/>
    <lineage>
        <taxon>Bacteria</taxon>
        <taxon>Pseudomonadati</taxon>
        <taxon>Pseudomonadota</taxon>
        <taxon>Gammaproteobacteria</taxon>
        <taxon>Enterobacterales</taxon>
        <taxon>Enterobacteriaceae</taxon>
        <taxon>Citrobacter</taxon>
    </lineage>
</organism>
<keyword id="KW-0963">Cytoplasm</keyword>
<keyword id="KW-0456">Lyase</keyword>
<keyword id="KW-0670">Pyruvate</keyword>
<keyword id="KW-1185">Reference proteome</keyword>
<keyword id="KW-0831">Ubiquinone biosynthesis</keyword>